<comment type="function">
    <text evidence="1">Member of a network of 50S ribosomal subunit biogenesis factors which assembles along the 30S-50S interface, preventing incorrect 23S rRNA structures from forming. Promotes peptidyl transferase center (PTC) maturation.</text>
</comment>
<comment type="subcellular location">
    <subcellularLocation>
        <location evidence="1">Cytoplasm</location>
    </subcellularLocation>
    <text evidence="1">Associates with late stage pre-50S ribosomal subunits.</text>
</comment>
<comment type="similarity">
    <text evidence="1">Belongs to the DarP family.</text>
</comment>
<comment type="sequence caution" evidence="2">
    <conflict type="erroneous initiation">
        <sequence resource="EMBL-CDS" id="AAG07861"/>
    </conflict>
    <text>Extended N-terminus.</text>
</comment>
<accession>Q9HVU8</accession>
<organism>
    <name type="scientific">Pseudomonas aeruginosa (strain ATCC 15692 / DSM 22644 / CIP 104116 / JCM 14847 / LMG 12228 / 1C / PRS 101 / PAO1)</name>
    <dbReference type="NCBI Taxonomy" id="208964"/>
    <lineage>
        <taxon>Bacteria</taxon>
        <taxon>Pseudomonadati</taxon>
        <taxon>Pseudomonadota</taxon>
        <taxon>Gammaproteobacteria</taxon>
        <taxon>Pseudomonadales</taxon>
        <taxon>Pseudomonadaceae</taxon>
        <taxon>Pseudomonas</taxon>
    </lineage>
</organism>
<reference key="1">
    <citation type="journal article" date="2000" name="Nature">
        <title>Complete genome sequence of Pseudomonas aeruginosa PAO1, an opportunistic pathogen.</title>
        <authorList>
            <person name="Stover C.K."/>
            <person name="Pham X.-Q.T."/>
            <person name="Erwin A.L."/>
            <person name="Mizoguchi S.D."/>
            <person name="Warrener P."/>
            <person name="Hickey M.J."/>
            <person name="Brinkman F.S.L."/>
            <person name="Hufnagle W.O."/>
            <person name="Kowalik D.J."/>
            <person name="Lagrou M."/>
            <person name="Garber R.L."/>
            <person name="Goltry L."/>
            <person name="Tolentino E."/>
            <person name="Westbrock-Wadman S."/>
            <person name="Yuan Y."/>
            <person name="Brody L.L."/>
            <person name="Coulter S.N."/>
            <person name="Folger K.R."/>
            <person name="Kas A."/>
            <person name="Larbig K."/>
            <person name="Lim R.M."/>
            <person name="Smith K.A."/>
            <person name="Spencer D.H."/>
            <person name="Wong G.K.-S."/>
            <person name="Wu Z."/>
            <person name="Paulsen I.T."/>
            <person name="Reizer J."/>
            <person name="Saier M.H. Jr."/>
            <person name="Hancock R.E.W."/>
            <person name="Lory S."/>
            <person name="Olson M.V."/>
        </authorList>
    </citation>
    <scope>NUCLEOTIDE SEQUENCE [LARGE SCALE GENOMIC DNA]</scope>
    <source>
        <strain>ATCC 15692 / DSM 22644 / CIP 104116 / JCM 14847 / LMG 12228 / 1C / PRS 101 / PAO1</strain>
    </source>
</reference>
<evidence type="ECO:0000255" key="1">
    <source>
        <dbReference type="HAMAP-Rule" id="MF_00765"/>
    </source>
</evidence>
<evidence type="ECO:0000305" key="2"/>
<feature type="chain" id="PRO_0000208223" description="Dual-action ribosomal maturation protein DarP">
    <location>
        <begin position="1"/>
        <end position="174"/>
    </location>
</feature>
<dbReference type="EMBL" id="AE004091">
    <property type="protein sequence ID" value="AAG07861.1"/>
    <property type="status" value="ALT_INIT"/>
    <property type="molecule type" value="Genomic_DNA"/>
</dbReference>
<dbReference type="PIR" id="C83086">
    <property type="entry name" value="C83086"/>
</dbReference>
<dbReference type="RefSeq" id="NP_253163.1">
    <property type="nucleotide sequence ID" value="NC_002516.2"/>
</dbReference>
<dbReference type="SMR" id="Q9HVU8"/>
<dbReference type="FunCoup" id="Q9HVU8">
    <property type="interactions" value="93"/>
</dbReference>
<dbReference type="STRING" id="208964.PA4473"/>
<dbReference type="PaxDb" id="208964-PA4473"/>
<dbReference type="DNASU" id="881038"/>
<dbReference type="GeneID" id="881038"/>
<dbReference type="KEGG" id="pae:PA4473"/>
<dbReference type="PATRIC" id="fig|208964.12.peg.4683"/>
<dbReference type="PseudoCAP" id="PA4473"/>
<dbReference type="HOGENOM" id="CLU_106757_4_0_6"/>
<dbReference type="InParanoid" id="Q9HVU8"/>
<dbReference type="OrthoDB" id="5293604at2"/>
<dbReference type="PhylomeDB" id="Q9HVU8"/>
<dbReference type="Proteomes" id="UP000002438">
    <property type="component" value="Chromosome"/>
</dbReference>
<dbReference type="GO" id="GO:0005829">
    <property type="term" value="C:cytosol"/>
    <property type="evidence" value="ECO:0000318"/>
    <property type="project" value="GO_Central"/>
</dbReference>
<dbReference type="GO" id="GO:0043022">
    <property type="term" value="F:ribosome binding"/>
    <property type="evidence" value="ECO:0007669"/>
    <property type="project" value="UniProtKB-UniRule"/>
</dbReference>
<dbReference type="GO" id="GO:0019843">
    <property type="term" value="F:rRNA binding"/>
    <property type="evidence" value="ECO:0007669"/>
    <property type="project" value="UniProtKB-UniRule"/>
</dbReference>
<dbReference type="GO" id="GO:1902626">
    <property type="term" value="P:assembly of large subunit precursor of preribosome"/>
    <property type="evidence" value="ECO:0007669"/>
    <property type="project" value="UniProtKB-UniRule"/>
</dbReference>
<dbReference type="CDD" id="cd16331">
    <property type="entry name" value="YjgA-like"/>
    <property type="match status" value="1"/>
</dbReference>
<dbReference type="FunFam" id="1.10.60.30:FF:000002">
    <property type="entry name" value="UPF0307 protein YjgA"/>
    <property type="match status" value="1"/>
</dbReference>
<dbReference type="Gene3D" id="1.10.60.30">
    <property type="entry name" value="PSPTO4464-like domains"/>
    <property type="match status" value="2"/>
</dbReference>
<dbReference type="HAMAP" id="MF_00765">
    <property type="entry name" value="DarP"/>
    <property type="match status" value="1"/>
</dbReference>
<dbReference type="InterPro" id="IPR006839">
    <property type="entry name" value="DarP"/>
</dbReference>
<dbReference type="InterPro" id="IPR023153">
    <property type="entry name" value="DarP_sf"/>
</dbReference>
<dbReference type="NCBIfam" id="NF003593">
    <property type="entry name" value="PRK05255.1-1"/>
    <property type="match status" value="1"/>
</dbReference>
<dbReference type="PANTHER" id="PTHR38101">
    <property type="entry name" value="UPF0307 PROTEIN YJGA"/>
    <property type="match status" value="1"/>
</dbReference>
<dbReference type="PANTHER" id="PTHR38101:SF1">
    <property type="entry name" value="UPF0307 PROTEIN YJGA"/>
    <property type="match status" value="1"/>
</dbReference>
<dbReference type="Pfam" id="PF04751">
    <property type="entry name" value="DarP"/>
    <property type="match status" value="1"/>
</dbReference>
<dbReference type="PIRSF" id="PIRSF016183">
    <property type="entry name" value="UCP016183"/>
    <property type="match status" value="1"/>
</dbReference>
<dbReference type="SUPFAM" id="SSF158710">
    <property type="entry name" value="PSPTO4464-like"/>
    <property type="match status" value="1"/>
</dbReference>
<keyword id="KW-0963">Cytoplasm</keyword>
<keyword id="KW-1185">Reference proteome</keyword>
<keyword id="KW-0690">Ribosome biogenesis</keyword>
<keyword id="KW-0694">RNA-binding</keyword>
<keyword id="KW-0699">rRNA-binding</keyword>
<sequence length="174" mass="20210">MAEFHDDDSQFEEKSKSQIKRELHALQDLGERLTTLQPQLLERLPLTDPLRKALLEAPKHKAHIARKRHIQYIGKLMRDQDVDAIVALIDQVDSSTRQYNERFHALERWRDQLIAGGDAALDAFVGEFPECDRQHLRGLVRHAQHEAAHNKPPAAARKVFKYIRELDETKRGLR</sequence>
<proteinExistence type="inferred from homology"/>
<protein>
    <recommendedName>
        <fullName evidence="1">Dual-action ribosomal maturation protein DarP</fullName>
    </recommendedName>
    <alternativeName>
        <fullName evidence="1">Large ribosomal subunit assembly factor DarP</fullName>
    </alternativeName>
</protein>
<name>DARP_PSEAE</name>
<gene>
    <name evidence="1" type="primary">darP</name>
    <name type="ordered locus">PA4473</name>
</gene>